<accession>P42490</accession>
<organism>
    <name type="scientific">African swine fever virus (strain Badajoz 1971 Vero-adapted)</name>
    <name type="common">Ba71V</name>
    <name type="synonym">ASFV</name>
    <dbReference type="NCBI Taxonomy" id="10498"/>
    <lineage>
        <taxon>Viruses</taxon>
        <taxon>Varidnaviria</taxon>
        <taxon>Bamfordvirae</taxon>
        <taxon>Nucleocytoviricota</taxon>
        <taxon>Pokkesviricetes</taxon>
        <taxon>Asfuvirales</taxon>
        <taxon>Asfarviridae</taxon>
        <taxon>Asfivirus</taxon>
        <taxon>African swine fever virus</taxon>
    </lineage>
</organism>
<comment type="function">
    <text>Catalyzes the conversion of dTMP to dTDP.</text>
</comment>
<comment type="catalytic activity">
    <reaction>
        <text>dTMP + ATP = dTDP + ADP</text>
        <dbReference type="Rhea" id="RHEA:13517"/>
        <dbReference type="ChEBI" id="CHEBI:30616"/>
        <dbReference type="ChEBI" id="CHEBI:58369"/>
        <dbReference type="ChEBI" id="CHEBI:63528"/>
        <dbReference type="ChEBI" id="CHEBI:456216"/>
        <dbReference type="EC" id="2.7.4.9"/>
    </reaction>
</comment>
<comment type="pathway">
    <text>Pyrimidine metabolism; dTTP biosynthesis.</text>
</comment>
<comment type="similarity">
    <text evidence="2">Belongs to the thymidylate kinase family.</text>
</comment>
<name>KTHY_ASFB7</name>
<sequence>MRGILITIEGINGVGKSTQAMRLKKALECMDYNAVCIRFPNPDTTTGGLILQVLNKMTEMSSEQLHKLFTKHHSEFSAEIAALLKLNFIVIVDHYIWSGLAYAQADGITIETKNIFKPDYTFFLSSKKPLNEKPLTLQRLFETKEKQETIFTNFTIIMNDVPKNRLCIIPATLNKEIIHTMILTKTIKVFDNNSCLNYIKMYDDKYLNVQDLNLFDFDWQKCIEDNNDKEEYDDDDGFII</sequence>
<reference key="1">
    <citation type="journal article" date="1993" name="J. Gen. Virol.">
        <title>African swine fever virus thymidylate kinase gene: sequence and transcriptional mapping.</title>
        <authorList>
            <person name="Yanez R.J."/>
            <person name="Rodriguez J.M."/>
            <person name="Rodriguez J.F."/>
            <person name="Salas M.L."/>
            <person name="Vinuela E."/>
        </authorList>
    </citation>
    <scope>NUCLEOTIDE SEQUENCE [GENOMIC DNA]</scope>
</reference>
<reference key="2">
    <citation type="journal article" date="1995" name="Virology">
        <title>Analysis of the complete nucleotide sequence of African swine fever virus.</title>
        <authorList>
            <person name="Yanez R.J."/>
            <person name="Rodriguez J.M."/>
            <person name="Nogal M.L."/>
            <person name="Yuste L."/>
            <person name="Enriquez C."/>
            <person name="Rodriguez J.F."/>
            <person name="Vinuela E."/>
        </authorList>
    </citation>
    <scope>NUCLEOTIDE SEQUENCE [LARGE SCALE GENOMIC DNA]</scope>
</reference>
<keyword id="KW-0067">ATP-binding</keyword>
<keyword id="KW-0418">Kinase</keyword>
<keyword id="KW-0545">Nucleotide biosynthesis</keyword>
<keyword id="KW-0547">Nucleotide-binding</keyword>
<keyword id="KW-1185">Reference proteome</keyword>
<keyword id="KW-0808">Transferase</keyword>
<organismHost>
    <name type="scientific">Ornithodoros</name>
    <name type="common">relapsing fever ticks</name>
    <dbReference type="NCBI Taxonomy" id="6937"/>
</organismHost>
<organismHost>
    <name type="scientific">Sus scrofa</name>
    <name type="common">Pig</name>
    <dbReference type="NCBI Taxonomy" id="9823"/>
</organismHost>
<proteinExistence type="inferred from homology"/>
<dbReference type="EC" id="2.7.4.9"/>
<dbReference type="EMBL" id="Z19544">
    <property type="protein sequence ID" value="CAA79604.1"/>
    <property type="molecule type" value="Genomic_DNA"/>
</dbReference>
<dbReference type="EMBL" id="U18466">
    <property type="protein sequence ID" value="AAA65265.1"/>
    <property type="molecule type" value="Genomic_DNA"/>
</dbReference>
<dbReference type="PIR" id="JQ2161">
    <property type="entry name" value="JQ2161"/>
</dbReference>
<dbReference type="RefSeq" id="NP_042729.1">
    <property type="nucleotide sequence ID" value="NC_001659.2"/>
</dbReference>
<dbReference type="SMR" id="P42490"/>
<dbReference type="GeneID" id="22220417"/>
<dbReference type="KEGG" id="vg:22220417"/>
<dbReference type="UniPathway" id="UPA00575"/>
<dbReference type="Proteomes" id="UP000000624">
    <property type="component" value="Segment"/>
</dbReference>
<dbReference type="GO" id="GO:0005524">
    <property type="term" value="F:ATP binding"/>
    <property type="evidence" value="ECO:0007669"/>
    <property type="project" value="UniProtKB-KW"/>
</dbReference>
<dbReference type="GO" id="GO:0004798">
    <property type="term" value="F:dTMP kinase activity"/>
    <property type="evidence" value="ECO:0007669"/>
    <property type="project" value="UniProtKB-EC"/>
</dbReference>
<dbReference type="GO" id="GO:0006233">
    <property type="term" value="P:dTDP biosynthetic process"/>
    <property type="evidence" value="ECO:0007669"/>
    <property type="project" value="TreeGrafter"/>
</dbReference>
<dbReference type="GO" id="GO:0006235">
    <property type="term" value="P:dTTP biosynthetic process"/>
    <property type="evidence" value="ECO:0007669"/>
    <property type="project" value="UniProtKB-UniPathway"/>
</dbReference>
<dbReference type="GO" id="GO:0006227">
    <property type="term" value="P:dUDP biosynthetic process"/>
    <property type="evidence" value="ECO:0007669"/>
    <property type="project" value="TreeGrafter"/>
</dbReference>
<dbReference type="Gene3D" id="3.40.50.300">
    <property type="entry name" value="P-loop containing nucleotide triphosphate hydrolases"/>
    <property type="match status" value="1"/>
</dbReference>
<dbReference type="InterPro" id="IPR027417">
    <property type="entry name" value="P-loop_NTPase"/>
</dbReference>
<dbReference type="InterPro" id="IPR039430">
    <property type="entry name" value="Thymidylate_kin-like_dom"/>
</dbReference>
<dbReference type="PANTHER" id="PTHR10344">
    <property type="entry name" value="THYMIDYLATE KINASE"/>
    <property type="match status" value="1"/>
</dbReference>
<dbReference type="PANTHER" id="PTHR10344:SF4">
    <property type="entry name" value="UMP-CMP KINASE 2, MITOCHONDRIAL"/>
    <property type="match status" value="1"/>
</dbReference>
<dbReference type="Pfam" id="PF02223">
    <property type="entry name" value="Thymidylate_kin"/>
    <property type="match status" value="1"/>
</dbReference>
<dbReference type="SUPFAM" id="SSF52540">
    <property type="entry name" value="P-loop containing nucleoside triphosphate hydrolases"/>
    <property type="match status" value="1"/>
</dbReference>
<dbReference type="PROSITE" id="PS01331">
    <property type="entry name" value="THYMIDYLATE_KINASE"/>
    <property type="match status" value="1"/>
</dbReference>
<gene>
    <name type="primary">TMK</name>
    <name type="ordered locus">BA71V-034</name>
    <name type="ORF">A240L</name>
</gene>
<feature type="chain" id="PRO_0000155215" description="Thymidylate kinase">
    <location>
        <begin position="1"/>
        <end position="240"/>
    </location>
</feature>
<feature type="binding site" evidence="1">
    <location>
        <begin position="10"/>
        <end position="17"/>
    </location>
    <ligand>
        <name>ATP</name>
        <dbReference type="ChEBI" id="CHEBI:30616"/>
    </ligand>
</feature>
<protein>
    <recommendedName>
        <fullName>Thymidylate kinase</fullName>
        <ecNumber>2.7.4.9</ecNumber>
    </recommendedName>
    <alternativeName>
        <fullName>dTMP kinase</fullName>
    </alternativeName>
</protein>
<evidence type="ECO:0000255" key="1"/>
<evidence type="ECO:0000305" key="2"/>